<accession>Q8NNK6</accession>
<accession>Q6M3P5</accession>
<feature type="signal peptide" evidence="2">
    <location>
        <begin position="1"/>
        <end position="35"/>
    </location>
</feature>
<feature type="chain" id="PRO_0000392964" description="Probable endopeptidase Cgl2188">
    <location>
        <begin position="36"/>
        <end position="209"/>
    </location>
</feature>
<feature type="domain" description="NlpC/P60" evidence="3">
    <location>
        <begin position="95"/>
        <end position="209"/>
    </location>
</feature>
<feature type="active site" description="Nucleophile" evidence="3">
    <location>
        <position position="125"/>
    </location>
</feature>
<feature type="active site" description="Proton acceptor" evidence="3">
    <location>
        <position position="173"/>
    </location>
</feature>
<feature type="active site" evidence="3">
    <location>
        <position position="185"/>
    </location>
</feature>
<evidence type="ECO:0000250" key="1">
    <source>
        <dbReference type="UniProtKB" id="A4QFQ3"/>
    </source>
</evidence>
<evidence type="ECO:0000255" key="2"/>
<evidence type="ECO:0000255" key="3">
    <source>
        <dbReference type="PROSITE-ProRule" id="PRU01284"/>
    </source>
</evidence>
<evidence type="ECO:0000305" key="4"/>
<evidence type="ECO:0000312" key="5">
    <source>
        <dbReference type="EMBL" id="CAF20529.1"/>
    </source>
</evidence>
<keyword id="KW-0378">Hydrolase</keyword>
<keyword id="KW-0645">Protease</keyword>
<keyword id="KW-1185">Reference proteome</keyword>
<keyword id="KW-0964">Secreted</keyword>
<keyword id="KW-0732">Signal</keyword>
<keyword id="KW-0788">Thiol protease</keyword>
<protein>
    <recommendedName>
        <fullName>Probable endopeptidase Cgl2188</fullName>
        <ecNumber>3.4.-.-</ecNumber>
    </recommendedName>
</protein>
<comment type="subcellular location">
    <subcellularLocation>
        <location evidence="1">Secreted</location>
    </subcellularLocation>
</comment>
<comment type="similarity">
    <text evidence="3 4">Belongs to the peptidase C40 family.</text>
</comment>
<gene>
    <name type="ordered locus">Cgl2188</name>
    <name type="ordered locus">cg2402</name>
</gene>
<sequence length="209" mass="21044">MGKHRRNNSNATRKAVAASAVALGATAAIASPAQAAEVVVPGTGISVDIAGIETTPGLNNVPGIDQWIPSLSSQAAPTAYAAVIDAPAAQAAPAASTGQAIVDAARTKIGSPYGWGATGPNAFDCSGLTSWAYSQVGKSIPRTSQAQAAQGTPVAYSDLQAGDIVAFYSGATHVGIYSGHGTVIHALNSSTPLSEHSLDYMPFHSAVRF</sequence>
<reference key="1">
    <citation type="journal article" date="2003" name="Appl. Microbiol. Biotechnol.">
        <title>The Corynebacterium glutamicum genome: features and impacts on biotechnological processes.</title>
        <authorList>
            <person name="Ikeda M."/>
            <person name="Nakagawa S."/>
        </authorList>
    </citation>
    <scope>NUCLEOTIDE SEQUENCE [LARGE SCALE GENOMIC DNA]</scope>
    <source>
        <strain>ATCC 13032 / DSM 20300 / JCM 1318 / BCRC 11384 / CCUG 27702 / LMG 3730 / NBRC 12168 / NCIMB 10025 / NRRL B-2784 / 534</strain>
    </source>
</reference>
<reference evidence="5" key="2">
    <citation type="journal article" date="2003" name="J. Biotechnol.">
        <title>The complete Corynebacterium glutamicum ATCC 13032 genome sequence and its impact on the production of L-aspartate-derived amino acids and vitamins.</title>
        <authorList>
            <person name="Kalinowski J."/>
            <person name="Bathe B."/>
            <person name="Bartels D."/>
            <person name="Bischoff N."/>
            <person name="Bott M."/>
            <person name="Burkovski A."/>
            <person name="Dusch N."/>
            <person name="Eggeling L."/>
            <person name="Eikmanns B.J."/>
            <person name="Gaigalat L."/>
            <person name="Goesmann A."/>
            <person name="Hartmann M."/>
            <person name="Huthmacher K."/>
            <person name="Kraemer R."/>
            <person name="Linke B."/>
            <person name="McHardy A.C."/>
            <person name="Meyer F."/>
            <person name="Moeckel B."/>
            <person name="Pfefferle W."/>
            <person name="Puehler A."/>
            <person name="Rey D.A."/>
            <person name="Rueckert C."/>
            <person name="Rupp O."/>
            <person name="Sahm H."/>
            <person name="Wendisch V.F."/>
            <person name="Wiegraebe I."/>
            <person name="Tauch A."/>
        </authorList>
    </citation>
    <scope>NUCLEOTIDE SEQUENCE [LARGE SCALE GENOMIC DNA]</scope>
    <source>
        <strain>ATCC 13032 / DSM 20300 / JCM 1318 / BCRC 11384 / CCUG 27702 / LMG 3730 / NBRC 12168 / NCIMB 10025 / NRRL B-2784 / 534</strain>
    </source>
</reference>
<proteinExistence type="inferred from homology"/>
<dbReference type="EC" id="3.4.-.-"/>
<dbReference type="EMBL" id="BA000036">
    <property type="protein sequence ID" value="BAB99581.1"/>
    <property type="molecule type" value="Genomic_DNA"/>
</dbReference>
<dbReference type="EMBL" id="BX927154">
    <property type="protein sequence ID" value="CAF20529.1"/>
    <property type="molecule type" value="Genomic_DNA"/>
</dbReference>
<dbReference type="RefSeq" id="NP_601392.1">
    <property type="nucleotide sequence ID" value="NC_003450.3"/>
</dbReference>
<dbReference type="RefSeq" id="WP_011014945.1">
    <property type="nucleotide sequence ID" value="NC_006958.1"/>
</dbReference>
<dbReference type="SMR" id="Q8NNK6"/>
<dbReference type="STRING" id="196627.cg2402"/>
<dbReference type="KEGG" id="cgb:cg2402"/>
<dbReference type="KEGG" id="cgl:Cgl2188"/>
<dbReference type="PATRIC" id="fig|196627.13.peg.2125"/>
<dbReference type="eggNOG" id="COG0791">
    <property type="taxonomic scope" value="Bacteria"/>
</dbReference>
<dbReference type="HOGENOM" id="CLU_016043_6_0_11"/>
<dbReference type="OrthoDB" id="5177647at2"/>
<dbReference type="BioCyc" id="CORYNE:G18NG-11780-MONOMER"/>
<dbReference type="Proteomes" id="UP000000582">
    <property type="component" value="Chromosome"/>
</dbReference>
<dbReference type="Proteomes" id="UP000001009">
    <property type="component" value="Chromosome"/>
</dbReference>
<dbReference type="GO" id="GO:0005576">
    <property type="term" value="C:extracellular region"/>
    <property type="evidence" value="ECO:0000250"/>
    <property type="project" value="UniProtKB"/>
</dbReference>
<dbReference type="GO" id="GO:0008234">
    <property type="term" value="F:cysteine-type peptidase activity"/>
    <property type="evidence" value="ECO:0007669"/>
    <property type="project" value="UniProtKB-KW"/>
</dbReference>
<dbReference type="GO" id="GO:0006508">
    <property type="term" value="P:proteolysis"/>
    <property type="evidence" value="ECO:0007669"/>
    <property type="project" value="UniProtKB-KW"/>
</dbReference>
<dbReference type="Gene3D" id="3.90.1720.10">
    <property type="entry name" value="endopeptidase domain like (from Nostoc punctiforme)"/>
    <property type="match status" value="1"/>
</dbReference>
<dbReference type="InterPro" id="IPR000064">
    <property type="entry name" value="NLP_P60_dom"/>
</dbReference>
<dbReference type="InterPro" id="IPR038765">
    <property type="entry name" value="Papain-like_cys_pep_sf"/>
</dbReference>
<dbReference type="InterPro" id="IPR051794">
    <property type="entry name" value="PG_Endopeptidase_C40"/>
</dbReference>
<dbReference type="PANTHER" id="PTHR47359:SF3">
    <property type="entry name" value="NLP_P60 DOMAIN-CONTAINING PROTEIN-RELATED"/>
    <property type="match status" value="1"/>
</dbReference>
<dbReference type="PANTHER" id="PTHR47359">
    <property type="entry name" value="PEPTIDOGLYCAN DL-ENDOPEPTIDASE CWLO"/>
    <property type="match status" value="1"/>
</dbReference>
<dbReference type="Pfam" id="PF00877">
    <property type="entry name" value="NLPC_P60"/>
    <property type="match status" value="1"/>
</dbReference>
<dbReference type="SUPFAM" id="SSF54001">
    <property type="entry name" value="Cysteine proteinases"/>
    <property type="match status" value="1"/>
</dbReference>
<dbReference type="PROSITE" id="PS51935">
    <property type="entry name" value="NLPC_P60"/>
    <property type="match status" value="1"/>
</dbReference>
<organism>
    <name type="scientific">Corynebacterium glutamicum (strain ATCC 13032 / DSM 20300 / JCM 1318 / BCRC 11384 / CCUG 27702 / LMG 3730 / NBRC 12168 / NCIMB 10025 / NRRL B-2784 / 534)</name>
    <dbReference type="NCBI Taxonomy" id="196627"/>
    <lineage>
        <taxon>Bacteria</taxon>
        <taxon>Bacillati</taxon>
        <taxon>Actinomycetota</taxon>
        <taxon>Actinomycetes</taxon>
        <taxon>Mycobacteriales</taxon>
        <taxon>Corynebacteriaceae</taxon>
        <taxon>Corynebacterium</taxon>
    </lineage>
</organism>
<name>Y2188_CORGL</name>